<accession>A6Q1J9</accession>
<evidence type="ECO:0000255" key="1">
    <source>
        <dbReference type="HAMAP-Rule" id="MF_00075"/>
    </source>
</evidence>
<reference key="1">
    <citation type="journal article" date="2007" name="Proc. Natl. Acad. Sci. U.S.A.">
        <title>Deep-sea vent epsilon-proteobacterial genomes provide insights into emergence of pathogens.</title>
        <authorList>
            <person name="Nakagawa S."/>
            <person name="Takaki Y."/>
            <person name="Shimamura S."/>
            <person name="Reysenbach A.-L."/>
            <person name="Takai K."/>
            <person name="Horikoshi K."/>
        </authorList>
    </citation>
    <scope>NUCLEOTIDE SEQUENCE [LARGE SCALE GENOMIC DNA]</scope>
    <source>
        <strain>SB155-2</strain>
    </source>
</reference>
<feature type="chain" id="PRO_0000338871" description="Translation initiation factor IF-1">
    <location>
        <begin position="1"/>
        <end position="72"/>
    </location>
</feature>
<feature type="domain" description="S1-like" evidence="1">
    <location>
        <begin position="1"/>
        <end position="72"/>
    </location>
</feature>
<gene>
    <name evidence="1" type="primary">infA</name>
    <name type="ordered locus">NIS_0244</name>
</gene>
<comment type="function">
    <text evidence="1">One of the essential components for the initiation of protein synthesis. Stabilizes the binding of IF-2 and IF-3 on the 30S subunit to which N-formylmethionyl-tRNA(fMet) subsequently binds. Helps modulate mRNA selection, yielding the 30S pre-initiation complex (PIC). Upon addition of the 50S ribosomal subunit IF-1, IF-2 and IF-3 are released leaving the mature 70S translation initiation complex.</text>
</comment>
<comment type="subunit">
    <text evidence="1">Component of the 30S ribosomal translation pre-initiation complex which assembles on the 30S ribosome in the order IF-2 and IF-3, IF-1 and N-formylmethionyl-tRNA(fMet); mRNA recruitment can occur at any time during PIC assembly.</text>
</comment>
<comment type="subcellular location">
    <subcellularLocation>
        <location evidence="1">Cytoplasm</location>
    </subcellularLocation>
</comment>
<comment type="similarity">
    <text evidence="1">Belongs to the IF-1 family.</text>
</comment>
<proteinExistence type="inferred from homology"/>
<organism>
    <name type="scientific">Nitratiruptor sp. (strain SB155-2)</name>
    <dbReference type="NCBI Taxonomy" id="387092"/>
    <lineage>
        <taxon>Bacteria</taxon>
        <taxon>Pseudomonadati</taxon>
        <taxon>Campylobacterota</taxon>
        <taxon>Epsilonproteobacteria</taxon>
        <taxon>Nautiliales</taxon>
        <taxon>Nitratiruptoraceae</taxon>
        <taxon>Nitratiruptor</taxon>
    </lineage>
</organism>
<keyword id="KW-0963">Cytoplasm</keyword>
<keyword id="KW-0396">Initiation factor</keyword>
<keyword id="KW-0648">Protein biosynthesis</keyword>
<keyword id="KW-1185">Reference proteome</keyword>
<keyword id="KW-0694">RNA-binding</keyword>
<keyword id="KW-0699">rRNA-binding</keyword>
<dbReference type="EMBL" id="AP009178">
    <property type="protein sequence ID" value="BAF69358.1"/>
    <property type="molecule type" value="Genomic_DNA"/>
</dbReference>
<dbReference type="RefSeq" id="WP_012081621.1">
    <property type="nucleotide sequence ID" value="NC_009662.1"/>
</dbReference>
<dbReference type="SMR" id="A6Q1J9"/>
<dbReference type="FunCoup" id="A6Q1J9">
    <property type="interactions" value="401"/>
</dbReference>
<dbReference type="STRING" id="387092.NIS_0244"/>
<dbReference type="KEGG" id="nis:NIS_0244"/>
<dbReference type="eggNOG" id="COG0361">
    <property type="taxonomic scope" value="Bacteria"/>
</dbReference>
<dbReference type="HOGENOM" id="CLU_151267_1_0_7"/>
<dbReference type="InParanoid" id="A6Q1J9"/>
<dbReference type="OrthoDB" id="9803250at2"/>
<dbReference type="Proteomes" id="UP000001118">
    <property type="component" value="Chromosome"/>
</dbReference>
<dbReference type="GO" id="GO:0005829">
    <property type="term" value="C:cytosol"/>
    <property type="evidence" value="ECO:0007669"/>
    <property type="project" value="TreeGrafter"/>
</dbReference>
<dbReference type="GO" id="GO:0043022">
    <property type="term" value="F:ribosome binding"/>
    <property type="evidence" value="ECO:0007669"/>
    <property type="project" value="UniProtKB-UniRule"/>
</dbReference>
<dbReference type="GO" id="GO:0019843">
    <property type="term" value="F:rRNA binding"/>
    <property type="evidence" value="ECO:0007669"/>
    <property type="project" value="UniProtKB-UniRule"/>
</dbReference>
<dbReference type="GO" id="GO:0003743">
    <property type="term" value="F:translation initiation factor activity"/>
    <property type="evidence" value="ECO:0007669"/>
    <property type="project" value="UniProtKB-UniRule"/>
</dbReference>
<dbReference type="CDD" id="cd04451">
    <property type="entry name" value="S1_IF1"/>
    <property type="match status" value="1"/>
</dbReference>
<dbReference type="FunFam" id="2.40.50.140:FF:000002">
    <property type="entry name" value="Translation initiation factor IF-1"/>
    <property type="match status" value="1"/>
</dbReference>
<dbReference type="Gene3D" id="2.40.50.140">
    <property type="entry name" value="Nucleic acid-binding proteins"/>
    <property type="match status" value="1"/>
</dbReference>
<dbReference type="HAMAP" id="MF_00075">
    <property type="entry name" value="IF_1"/>
    <property type="match status" value="1"/>
</dbReference>
<dbReference type="InterPro" id="IPR012340">
    <property type="entry name" value="NA-bd_OB-fold"/>
</dbReference>
<dbReference type="InterPro" id="IPR006196">
    <property type="entry name" value="RNA-binding_domain_S1_IF1"/>
</dbReference>
<dbReference type="InterPro" id="IPR003029">
    <property type="entry name" value="S1_domain"/>
</dbReference>
<dbReference type="InterPro" id="IPR004368">
    <property type="entry name" value="TIF_IF1"/>
</dbReference>
<dbReference type="NCBIfam" id="TIGR00008">
    <property type="entry name" value="infA"/>
    <property type="match status" value="1"/>
</dbReference>
<dbReference type="PANTHER" id="PTHR33370">
    <property type="entry name" value="TRANSLATION INITIATION FACTOR IF-1, CHLOROPLASTIC"/>
    <property type="match status" value="1"/>
</dbReference>
<dbReference type="PANTHER" id="PTHR33370:SF1">
    <property type="entry name" value="TRANSLATION INITIATION FACTOR IF-1, CHLOROPLASTIC"/>
    <property type="match status" value="1"/>
</dbReference>
<dbReference type="Pfam" id="PF01176">
    <property type="entry name" value="eIF-1a"/>
    <property type="match status" value="1"/>
</dbReference>
<dbReference type="SMART" id="SM00316">
    <property type="entry name" value="S1"/>
    <property type="match status" value="1"/>
</dbReference>
<dbReference type="SUPFAM" id="SSF50249">
    <property type="entry name" value="Nucleic acid-binding proteins"/>
    <property type="match status" value="1"/>
</dbReference>
<dbReference type="PROSITE" id="PS50832">
    <property type="entry name" value="S1_IF1_TYPE"/>
    <property type="match status" value="1"/>
</dbReference>
<sequence>MAKDDVIEVDGIVKEALPNAMFRVELENGHVVLCHIAGKMRMHYIKILPGDKVKVELTPYSLDKGRITFRYK</sequence>
<name>IF1_NITSB</name>
<protein>
    <recommendedName>
        <fullName evidence="1">Translation initiation factor IF-1</fullName>
    </recommendedName>
</protein>